<keyword id="KW-0963">Cytoplasm</keyword>
<keyword id="KW-0408">Iron</keyword>
<keyword id="KW-0479">Metal-binding</keyword>
<keyword id="KW-0520">NAD</keyword>
<keyword id="KW-0539">Nucleus</keyword>
<keyword id="KW-1185">Reference proteome</keyword>
<keyword id="KW-0784">Thiamine biosynthesis</keyword>
<keyword id="KW-0808">Transferase</keyword>
<sequence>MAPPSAVEANSPIDGVHLKSAFEVKAVHAQTASQGKTLAELAEKWDQGFTFAPIRESQVSRAMTRRYFKDLDTYAESDVVIVGAGSCGLSTAYMLGKARPDLKIAIIEASVSPGGGAWLGGQLFSAMVMRKPADAFLIDLGVPFEDEGDFVVVKHAALFTSTLLSKVLAFPNIKLFNATSVEDLITRQTADGNIRIAGVVTNWTLVTMHHDDQSCMDPNTINAPIVISTTGHDGPFGAFCVKRLVSMNQIKELGGMRGLDMNVAEDAIVKKTREIVPGLIVGGMELSEVDGANRMGPTFGAMALSGVKAAEEALKVFDERKAQNAY</sequence>
<protein>
    <recommendedName>
        <fullName evidence="1">Thiamine thiazole synthase</fullName>
        <ecNumber evidence="1">2.4.2.60</ecNumber>
    </recommendedName>
    <alternativeName>
        <fullName evidence="1">Thiazole biosynthetic enzyme</fullName>
    </alternativeName>
</protein>
<gene>
    <name type="ORF">SS1G_09727</name>
</gene>
<reference key="1">
    <citation type="journal article" date="2011" name="PLoS Genet.">
        <title>Genomic analysis of the necrotrophic fungal pathogens Sclerotinia sclerotiorum and Botrytis cinerea.</title>
        <authorList>
            <person name="Amselem J."/>
            <person name="Cuomo C.A."/>
            <person name="van Kan J.A.L."/>
            <person name="Viaud M."/>
            <person name="Benito E.P."/>
            <person name="Couloux A."/>
            <person name="Coutinho P.M."/>
            <person name="de Vries R.P."/>
            <person name="Dyer P.S."/>
            <person name="Fillinger S."/>
            <person name="Fournier E."/>
            <person name="Gout L."/>
            <person name="Hahn M."/>
            <person name="Kohn L."/>
            <person name="Lapalu N."/>
            <person name="Plummer K.M."/>
            <person name="Pradier J.-M."/>
            <person name="Quevillon E."/>
            <person name="Sharon A."/>
            <person name="Simon A."/>
            <person name="ten Have A."/>
            <person name="Tudzynski B."/>
            <person name="Tudzynski P."/>
            <person name="Wincker P."/>
            <person name="Andrew M."/>
            <person name="Anthouard V."/>
            <person name="Beever R.E."/>
            <person name="Beffa R."/>
            <person name="Benoit I."/>
            <person name="Bouzid O."/>
            <person name="Brault B."/>
            <person name="Chen Z."/>
            <person name="Choquer M."/>
            <person name="Collemare J."/>
            <person name="Cotton P."/>
            <person name="Danchin E.G."/>
            <person name="Da Silva C."/>
            <person name="Gautier A."/>
            <person name="Giraud C."/>
            <person name="Giraud T."/>
            <person name="Gonzalez C."/>
            <person name="Grossetete S."/>
            <person name="Gueldener U."/>
            <person name="Henrissat B."/>
            <person name="Howlett B.J."/>
            <person name="Kodira C."/>
            <person name="Kretschmer M."/>
            <person name="Lappartient A."/>
            <person name="Leroch M."/>
            <person name="Levis C."/>
            <person name="Mauceli E."/>
            <person name="Neuveglise C."/>
            <person name="Oeser B."/>
            <person name="Pearson M."/>
            <person name="Poulain J."/>
            <person name="Poussereau N."/>
            <person name="Quesneville H."/>
            <person name="Rascle C."/>
            <person name="Schumacher J."/>
            <person name="Segurens B."/>
            <person name="Sexton A."/>
            <person name="Silva E."/>
            <person name="Sirven C."/>
            <person name="Soanes D.M."/>
            <person name="Talbot N.J."/>
            <person name="Templeton M."/>
            <person name="Yandava C."/>
            <person name="Yarden O."/>
            <person name="Zeng Q."/>
            <person name="Rollins J.A."/>
            <person name="Lebrun M.-H."/>
            <person name="Dickman M."/>
        </authorList>
    </citation>
    <scope>NUCLEOTIDE SEQUENCE [LARGE SCALE GENOMIC DNA]</scope>
    <source>
        <strain>ATCC 18683 / 1980 / Ss-1</strain>
    </source>
</reference>
<organism>
    <name type="scientific">Sclerotinia sclerotiorum (strain ATCC 18683 / 1980 / Ss-1)</name>
    <name type="common">White mold</name>
    <name type="synonym">Whetzelinia sclerotiorum</name>
    <dbReference type="NCBI Taxonomy" id="665079"/>
    <lineage>
        <taxon>Eukaryota</taxon>
        <taxon>Fungi</taxon>
        <taxon>Dikarya</taxon>
        <taxon>Ascomycota</taxon>
        <taxon>Pezizomycotina</taxon>
        <taxon>Leotiomycetes</taxon>
        <taxon>Helotiales</taxon>
        <taxon>Sclerotiniaceae</taxon>
        <taxon>Sclerotinia</taxon>
    </lineage>
</organism>
<feature type="chain" id="PRO_0000415880" description="Thiamine thiazole synthase">
    <location>
        <begin position="1"/>
        <end position="326"/>
    </location>
</feature>
<feature type="binding site" evidence="1">
    <location>
        <position position="87"/>
    </location>
    <ligand>
        <name>substrate</name>
    </ligand>
</feature>
<feature type="binding site" evidence="1">
    <location>
        <begin position="108"/>
        <end position="109"/>
    </location>
    <ligand>
        <name>substrate</name>
    </ligand>
</feature>
<feature type="binding site" evidence="1">
    <location>
        <position position="116"/>
    </location>
    <ligand>
        <name>substrate</name>
    </ligand>
</feature>
<feature type="binding site" evidence="1">
    <location>
        <position position="181"/>
    </location>
    <ligand>
        <name>substrate</name>
    </ligand>
</feature>
<feature type="binding site" evidence="1">
    <location>
        <position position="217"/>
    </location>
    <ligand>
        <name>substrate</name>
    </ligand>
</feature>
<feature type="binding site" evidence="1">
    <location>
        <position position="232"/>
    </location>
    <ligand>
        <name>substrate</name>
    </ligand>
</feature>
<feature type="binding site" evidence="1">
    <location>
        <position position="284"/>
    </location>
    <ligand>
        <name>substrate</name>
    </ligand>
</feature>
<feature type="binding site" evidence="1">
    <location>
        <begin position="294"/>
        <end position="296"/>
    </location>
    <ligand>
        <name>substrate</name>
    </ligand>
</feature>
<feature type="modified residue" description="2,3-didehydroalanine (Cys)" evidence="1">
    <location>
        <position position="215"/>
    </location>
</feature>
<dbReference type="EC" id="2.4.2.60" evidence="1"/>
<dbReference type="EMBL" id="CH476634">
    <property type="protein sequence ID" value="EDN93860.1"/>
    <property type="molecule type" value="Genomic_DNA"/>
</dbReference>
<dbReference type="RefSeq" id="XP_001589094.1">
    <property type="nucleotide sequence ID" value="XM_001589044.1"/>
</dbReference>
<dbReference type="SMR" id="A7EWL8"/>
<dbReference type="FunCoup" id="A7EWL8">
    <property type="interactions" value="796"/>
</dbReference>
<dbReference type="STRING" id="665079.A7EWL8"/>
<dbReference type="GeneID" id="5485265"/>
<dbReference type="KEGG" id="ssl:SS1G_09727"/>
<dbReference type="InParanoid" id="A7EWL8"/>
<dbReference type="OMA" id="MFPRIVV"/>
<dbReference type="Proteomes" id="UP000001312">
    <property type="component" value="Unassembled WGS sequence"/>
</dbReference>
<dbReference type="GO" id="GO:0005829">
    <property type="term" value="C:cytosol"/>
    <property type="evidence" value="ECO:0007669"/>
    <property type="project" value="UniProtKB-UniRule"/>
</dbReference>
<dbReference type="GO" id="GO:0005634">
    <property type="term" value="C:nucleus"/>
    <property type="evidence" value="ECO:0007669"/>
    <property type="project" value="UniProtKB-SubCell"/>
</dbReference>
<dbReference type="GO" id="GO:0160205">
    <property type="term" value="F:cysteine-dependent adenosine diphosphate thiazole synthase activity"/>
    <property type="evidence" value="ECO:0007669"/>
    <property type="project" value="UniProtKB-EC"/>
</dbReference>
<dbReference type="GO" id="GO:0005506">
    <property type="term" value="F:iron ion binding"/>
    <property type="evidence" value="ECO:0000318"/>
    <property type="project" value="GO_Central"/>
</dbReference>
<dbReference type="GO" id="GO:0009228">
    <property type="term" value="P:thiamine biosynthetic process"/>
    <property type="evidence" value="ECO:0007669"/>
    <property type="project" value="UniProtKB-UniRule"/>
</dbReference>
<dbReference type="GO" id="GO:0052837">
    <property type="term" value="P:thiazole biosynthetic process"/>
    <property type="evidence" value="ECO:0000318"/>
    <property type="project" value="GO_Central"/>
</dbReference>
<dbReference type="Gene3D" id="6.10.250.2840">
    <property type="match status" value="1"/>
</dbReference>
<dbReference type="Gene3D" id="3.50.50.60">
    <property type="entry name" value="FAD/NAD(P)-binding domain"/>
    <property type="match status" value="1"/>
</dbReference>
<dbReference type="HAMAP" id="MF_03158">
    <property type="entry name" value="THI4"/>
    <property type="match status" value="1"/>
</dbReference>
<dbReference type="InterPro" id="IPR036188">
    <property type="entry name" value="FAD/NAD-bd_sf"/>
</dbReference>
<dbReference type="InterPro" id="IPR027495">
    <property type="entry name" value="Sti35"/>
</dbReference>
<dbReference type="InterPro" id="IPR002922">
    <property type="entry name" value="Thi4_fam"/>
</dbReference>
<dbReference type="NCBIfam" id="TIGR00292">
    <property type="entry name" value="sulfide-dependent adenosine diphosphate thiazole synthase"/>
    <property type="match status" value="1"/>
</dbReference>
<dbReference type="PANTHER" id="PTHR43422">
    <property type="entry name" value="THIAMINE THIAZOLE SYNTHASE"/>
    <property type="match status" value="1"/>
</dbReference>
<dbReference type="PANTHER" id="PTHR43422:SF3">
    <property type="entry name" value="THIAMINE THIAZOLE SYNTHASE"/>
    <property type="match status" value="1"/>
</dbReference>
<dbReference type="Pfam" id="PF01946">
    <property type="entry name" value="Thi4"/>
    <property type="match status" value="1"/>
</dbReference>
<dbReference type="SUPFAM" id="SSF51905">
    <property type="entry name" value="FAD/NAD(P)-binding domain"/>
    <property type="match status" value="1"/>
</dbReference>
<proteinExistence type="inferred from homology"/>
<comment type="function">
    <text evidence="1">Involved in biosynthesis of the thiamine precursor thiazole. Catalyzes the conversion of NAD and glycine to adenosine diphosphate 5-(2-hydroxyethyl)-4-methylthiazole-2-carboxylic acid (ADT), an adenylated thiazole intermediate. The reaction includes an iron-dependent sulfide transfer from a conserved cysteine residue of the protein to a thiazole intermediate. The enzyme can only undergo a single turnover, which suggests it is a suicide enzyme. May have additional roles in adaptation to various stress conditions and in DNA damage tolerance.</text>
</comment>
<comment type="catalytic activity">
    <reaction evidence="1">
        <text>[ADP-thiazole synthase]-L-cysteine + glycine + NAD(+) = [ADP-thiazole synthase]-dehydroalanine + ADP-5-ethyl-4-methylthiazole-2-carboxylate + nicotinamide + 3 H2O + 2 H(+)</text>
        <dbReference type="Rhea" id="RHEA:55708"/>
        <dbReference type="Rhea" id="RHEA-COMP:14264"/>
        <dbReference type="Rhea" id="RHEA-COMP:14265"/>
        <dbReference type="ChEBI" id="CHEBI:15377"/>
        <dbReference type="ChEBI" id="CHEBI:15378"/>
        <dbReference type="ChEBI" id="CHEBI:17154"/>
        <dbReference type="ChEBI" id="CHEBI:29950"/>
        <dbReference type="ChEBI" id="CHEBI:57305"/>
        <dbReference type="ChEBI" id="CHEBI:57540"/>
        <dbReference type="ChEBI" id="CHEBI:90873"/>
        <dbReference type="ChEBI" id="CHEBI:139151"/>
        <dbReference type="EC" id="2.4.2.60"/>
    </reaction>
</comment>
<comment type="cofactor">
    <cofactor evidence="1">
        <name>Fe cation</name>
        <dbReference type="ChEBI" id="CHEBI:24875"/>
    </cofactor>
    <text evidence="1">Binds 1 Fe cation per subunit.</text>
</comment>
<comment type="subunit">
    <text evidence="1">Homooctamer.</text>
</comment>
<comment type="subcellular location">
    <subcellularLocation>
        <location evidence="1">Cytoplasm</location>
    </subcellularLocation>
    <subcellularLocation>
        <location evidence="1">Nucleus</location>
    </subcellularLocation>
</comment>
<comment type="PTM">
    <text evidence="1">During the catalytic reaction, a sulfide is transferred from Cys-215 to a reaction intermediate, generating a dehydroalanine residue.</text>
</comment>
<comment type="similarity">
    <text evidence="1">Belongs to the THI4 family.</text>
</comment>
<evidence type="ECO:0000255" key="1">
    <source>
        <dbReference type="HAMAP-Rule" id="MF_03158"/>
    </source>
</evidence>
<accession>A7EWL8</accession>
<name>THI4_SCLS1</name>